<protein>
    <recommendedName>
        <fullName evidence="1">Bifunctional glutamine synthetase adenylyltransferase/adenylyl-removing enzyme</fullName>
    </recommendedName>
    <alternativeName>
        <fullName evidence="1">ATP:glutamine synthetase adenylyltransferase</fullName>
    </alternativeName>
    <alternativeName>
        <fullName evidence="1">ATase</fullName>
    </alternativeName>
    <domain>
        <recommendedName>
            <fullName evidence="1">Glutamine synthetase adenylyl-L-tyrosine phosphorylase</fullName>
            <ecNumber evidence="1">2.7.7.89</ecNumber>
        </recommendedName>
        <alternativeName>
            <fullName evidence="1">Adenylyl removase</fullName>
            <shortName evidence="1">AR</shortName>
            <shortName evidence="1">AT-N</shortName>
        </alternativeName>
    </domain>
    <domain>
        <recommendedName>
            <fullName evidence="1">Glutamine synthetase adenylyl transferase</fullName>
            <ecNumber evidence="1">2.7.7.42</ecNumber>
        </recommendedName>
        <alternativeName>
            <fullName evidence="1">Adenylyl transferase</fullName>
            <shortName evidence="1">AT</shortName>
            <shortName evidence="1">AT-C</shortName>
        </alternativeName>
    </domain>
</protein>
<reference key="1">
    <citation type="journal article" date="2003" name="Nat. Genet.">
        <title>Comparative analysis of the genome sequences of Bordetella pertussis, Bordetella parapertussis and Bordetella bronchiseptica.</title>
        <authorList>
            <person name="Parkhill J."/>
            <person name="Sebaihia M."/>
            <person name="Preston A."/>
            <person name="Murphy L.D."/>
            <person name="Thomson N.R."/>
            <person name="Harris D.E."/>
            <person name="Holden M.T.G."/>
            <person name="Churcher C.M."/>
            <person name="Bentley S.D."/>
            <person name="Mungall K.L."/>
            <person name="Cerdeno-Tarraga A.-M."/>
            <person name="Temple L."/>
            <person name="James K.D."/>
            <person name="Harris B."/>
            <person name="Quail M.A."/>
            <person name="Achtman M."/>
            <person name="Atkin R."/>
            <person name="Baker S."/>
            <person name="Basham D."/>
            <person name="Bason N."/>
            <person name="Cherevach I."/>
            <person name="Chillingworth T."/>
            <person name="Collins M."/>
            <person name="Cronin A."/>
            <person name="Davis P."/>
            <person name="Doggett J."/>
            <person name="Feltwell T."/>
            <person name="Goble A."/>
            <person name="Hamlin N."/>
            <person name="Hauser H."/>
            <person name="Holroyd S."/>
            <person name="Jagels K."/>
            <person name="Leather S."/>
            <person name="Moule S."/>
            <person name="Norberczak H."/>
            <person name="O'Neil S."/>
            <person name="Ormond D."/>
            <person name="Price C."/>
            <person name="Rabbinowitsch E."/>
            <person name="Rutter S."/>
            <person name="Sanders M."/>
            <person name="Saunders D."/>
            <person name="Seeger K."/>
            <person name="Sharp S."/>
            <person name="Simmonds M."/>
            <person name="Skelton J."/>
            <person name="Squares R."/>
            <person name="Squares S."/>
            <person name="Stevens K."/>
            <person name="Unwin L."/>
            <person name="Whitehead S."/>
            <person name="Barrell B.G."/>
            <person name="Maskell D.J."/>
        </authorList>
    </citation>
    <scope>NUCLEOTIDE SEQUENCE [LARGE SCALE GENOMIC DNA]</scope>
    <source>
        <strain>ATCC BAA-588 / NCTC 13252 / RB50</strain>
    </source>
</reference>
<accession>Q7WHH4</accession>
<evidence type="ECO:0000255" key="1">
    <source>
        <dbReference type="HAMAP-Rule" id="MF_00802"/>
    </source>
</evidence>
<organism>
    <name type="scientific">Bordetella bronchiseptica (strain ATCC BAA-588 / NCTC 13252 / RB50)</name>
    <name type="common">Alcaligenes bronchisepticus</name>
    <dbReference type="NCBI Taxonomy" id="257310"/>
    <lineage>
        <taxon>Bacteria</taxon>
        <taxon>Pseudomonadati</taxon>
        <taxon>Pseudomonadota</taxon>
        <taxon>Betaproteobacteria</taxon>
        <taxon>Burkholderiales</taxon>
        <taxon>Alcaligenaceae</taxon>
        <taxon>Bordetella</taxon>
    </lineage>
</organism>
<sequence length="941" mass="104306">MSSAPPFAAALAWSGHLRRRLDAHPDLAAWLANACAHPVSANVLAAWQAELSGPDAPEVLPVEQCRGMLRKLRERVFLTLIVRDLGGQADLEEVVGAMTVLADIAVGTAYRSVAAELAAVHGLPREQSTGDPQEMLIVGMGKLGGRELNVSSDIDLVMLYGDEGETDGPRRISNHEFYGRLTRRMMPVLSEVDADGQVFRTDLRLRPDGDAGPLAWSLDALEHYLIGQGREWERYAWLKARLMPAQAFADSNPDAQARQLESLRVPFVYRKYFDFDALAALRALRERIRQDWQRRALARNGVDSANNIKLGDGGIREIEFIVQLSQLIRGGRMPALQRRGLLEALHAERAAGLVPEGDAQKLEAAYRFLRRTEHALQYREDEQTHLLPADPAQRAALAAALGYEPAAFERTLAEHRAFVSQTFRNAFRLAGMGEEDDSPAPARTPANGHGMRPHAGALHDIEERLAGQIQRDFPEHAEDLLRRTETLLGSHRVRSLPDSSRHRLEALLPAALTAAAQTSAPMDAALRLFDLIETIAQRSAYLALLAEYPDTLARVARMVAASPWAAQYLTQHPLLLDSLIDWRTLFEPLDFAQVARQLAADLDACRLPDGEPDIERQMNLMRDVQRQASFQLLAQDLEGELTVEKLADQLSALADLLLAETIRRVWPLVNRRPGAEPHLAVIAYGKLGGKELGYASDLDLVFLFDDDREDAAELYAKLGRRMTSWLSTMTSSGRLYEVDLRLRPDGDAGLLAVSLEAFEQYQRSHAWPWEHQALTRARYAAGDTEAGARFERIRADILVMPRDVQALRGEVLGMRDKISAGHPNRSELFDVKHDRGGMVDVEFVTQYLVLCHAATHRVLVNNLGNIALLRLAGEAGLIPAPLALAAGDAYRTLRRAQHQLRLKGVDKARVPPGQLAAERATVCELWQTVLQDGTIAQAEVK</sequence>
<feature type="chain" id="PRO_0000209231" description="Bifunctional glutamine synthetase adenylyltransferase/adenylyl-removing enzyme">
    <location>
        <begin position="1"/>
        <end position="941"/>
    </location>
</feature>
<feature type="region of interest" description="Adenylyl removase" evidence="1">
    <location>
        <begin position="1"/>
        <end position="431"/>
    </location>
</feature>
<feature type="region of interest" description="Adenylyl transferase" evidence="1">
    <location>
        <begin position="447"/>
        <end position="941"/>
    </location>
</feature>
<proteinExistence type="inferred from homology"/>
<dbReference type="EC" id="2.7.7.89" evidence="1"/>
<dbReference type="EC" id="2.7.7.42" evidence="1"/>
<dbReference type="EMBL" id="BX640446">
    <property type="protein sequence ID" value="CAE33725.1"/>
    <property type="molecule type" value="Genomic_DNA"/>
</dbReference>
<dbReference type="RefSeq" id="WP_003810574.1">
    <property type="nucleotide sequence ID" value="NC_002927.3"/>
</dbReference>
<dbReference type="SMR" id="Q7WHH4"/>
<dbReference type="GeneID" id="56479343"/>
<dbReference type="KEGG" id="bbr:BB3233"/>
<dbReference type="eggNOG" id="COG1391">
    <property type="taxonomic scope" value="Bacteria"/>
</dbReference>
<dbReference type="HOGENOM" id="CLU_006233_0_1_4"/>
<dbReference type="Proteomes" id="UP000001027">
    <property type="component" value="Chromosome"/>
</dbReference>
<dbReference type="GO" id="GO:0005829">
    <property type="term" value="C:cytosol"/>
    <property type="evidence" value="ECO:0007669"/>
    <property type="project" value="TreeGrafter"/>
</dbReference>
<dbReference type="GO" id="GO:0008882">
    <property type="term" value="F:[glutamate-ammonia-ligase] adenylyltransferase activity"/>
    <property type="evidence" value="ECO:0007669"/>
    <property type="project" value="UniProtKB-UniRule"/>
</dbReference>
<dbReference type="GO" id="GO:0047388">
    <property type="term" value="F:[glutamine synthetase]-adenylyl-L-tyrosine phosphorylase activity"/>
    <property type="evidence" value="ECO:0007669"/>
    <property type="project" value="UniProtKB-EC"/>
</dbReference>
<dbReference type="GO" id="GO:0005524">
    <property type="term" value="F:ATP binding"/>
    <property type="evidence" value="ECO:0007669"/>
    <property type="project" value="UniProtKB-UniRule"/>
</dbReference>
<dbReference type="GO" id="GO:0000287">
    <property type="term" value="F:magnesium ion binding"/>
    <property type="evidence" value="ECO:0007669"/>
    <property type="project" value="UniProtKB-UniRule"/>
</dbReference>
<dbReference type="GO" id="GO:0000820">
    <property type="term" value="P:regulation of glutamine family amino acid metabolic process"/>
    <property type="evidence" value="ECO:0007669"/>
    <property type="project" value="UniProtKB-UniRule"/>
</dbReference>
<dbReference type="CDD" id="cd05401">
    <property type="entry name" value="NT_GlnE_GlnD_like"/>
    <property type="match status" value="2"/>
</dbReference>
<dbReference type="FunFam" id="1.20.120.330:FF:000005">
    <property type="entry name" value="Bifunctional glutamine synthetase adenylyltransferase/adenylyl-removing enzyme"/>
    <property type="match status" value="1"/>
</dbReference>
<dbReference type="Gene3D" id="1.20.120.1510">
    <property type="match status" value="1"/>
</dbReference>
<dbReference type="Gene3D" id="3.30.460.10">
    <property type="entry name" value="Beta Polymerase, domain 2"/>
    <property type="match status" value="2"/>
</dbReference>
<dbReference type="Gene3D" id="1.20.120.330">
    <property type="entry name" value="Nucleotidyltransferases domain 2"/>
    <property type="match status" value="2"/>
</dbReference>
<dbReference type="HAMAP" id="MF_00802">
    <property type="entry name" value="GlnE"/>
    <property type="match status" value="1"/>
</dbReference>
<dbReference type="InterPro" id="IPR023057">
    <property type="entry name" value="GlnE"/>
</dbReference>
<dbReference type="InterPro" id="IPR005190">
    <property type="entry name" value="GlnE_rpt_dom"/>
</dbReference>
<dbReference type="InterPro" id="IPR043519">
    <property type="entry name" value="NT_sf"/>
</dbReference>
<dbReference type="InterPro" id="IPR013546">
    <property type="entry name" value="PII_UdlTrfase/GS_AdlTrfase"/>
</dbReference>
<dbReference type="NCBIfam" id="NF008292">
    <property type="entry name" value="PRK11072.1"/>
    <property type="match status" value="1"/>
</dbReference>
<dbReference type="PANTHER" id="PTHR30621:SF0">
    <property type="entry name" value="BIFUNCTIONAL GLUTAMINE SYNTHETASE ADENYLYLTRANSFERASE_ADENYLYL-REMOVING ENZYME"/>
    <property type="match status" value="1"/>
</dbReference>
<dbReference type="PANTHER" id="PTHR30621">
    <property type="entry name" value="GLUTAMINE SYNTHETASE ADENYLYLTRANSFERASE"/>
    <property type="match status" value="1"/>
</dbReference>
<dbReference type="Pfam" id="PF08335">
    <property type="entry name" value="GlnD_UR_UTase"/>
    <property type="match status" value="2"/>
</dbReference>
<dbReference type="Pfam" id="PF03710">
    <property type="entry name" value="GlnE"/>
    <property type="match status" value="2"/>
</dbReference>
<dbReference type="SUPFAM" id="SSF81301">
    <property type="entry name" value="Nucleotidyltransferase"/>
    <property type="match status" value="2"/>
</dbReference>
<dbReference type="SUPFAM" id="SSF81593">
    <property type="entry name" value="Nucleotidyltransferase substrate binding subunit/domain"/>
    <property type="match status" value="2"/>
</dbReference>
<name>GLNE_BORBR</name>
<comment type="function">
    <text evidence="1">Involved in the regulation of glutamine synthetase GlnA, a key enzyme in the process to assimilate ammonia. When cellular nitrogen levels are high, the C-terminal adenylyl transferase (AT) inactivates GlnA by covalent transfer of an adenylyl group from ATP to specific tyrosine residue of GlnA, thus reducing its activity. Conversely, when nitrogen levels are low, the N-terminal adenylyl removase (AR) activates GlnA by removing the adenylyl group by phosphorolysis, increasing its activity. The regulatory region of GlnE binds the signal transduction protein PII (GlnB) which indicates the nitrogen status of the cell.</text>
</comment>
<comment type="catalytic activity">
    <reaction evidence="1">
        <text>[glutamine synthetase]-O(4)-(5'-adenylyl)-L-tyrosine + phosphate = [glutamine synthetase]-L-tyrosine + ADP</text>
        <dbReference type="Rhea" id="RHEA:43716"/>
        <dbReference type="Rhea" id="RHEA-COMP:10660"/>
        <dbReference type="Rhea" id="RHEA-COMP:10661"/>
        <dbReference type="ChEBI" id="CHEBI:43474"/>
        <dbReference type="ChEBI" id="CHEBI:46858"/>
        <dbReference type="ChEBI" id="CHEBI:83624"/>
        <dbReference type="ChEBI" id="CHEBI:456216"/>
        <dbReference type="EC" id="2.7.7.89"/>
    </reaction>
</comment>
<comment type="catalytic activity">
    <reaction evidence="1">
        <text>[glutamine synthetase]-L-tyrosine + ATP = [glutamine synthetase]-O(4)-(5'-adenylyl)-L-tyrosine + diphosphate</text>
        <dbReference type="Rhea" id="RHEA:18589"/>
        <dbReference type="Rhea" id="RHEA-COMP:10660"/>
        <dbReference type="Rhea" id="RHEA-COMP:10661"/>
        <dbReference type="ChEBI" id="CHEBI:30616"/>
        <dbReference type="ChEBI" id="CHEBI:33019"/>
        <dbReference type="ChEBI" id="CHEBI:46858"/>
        <dbReference type="ChEBI" id="CHEBI:83624"/>
        <dbReference type="EC" id="2.7.7.42"/>
    </reaction>
</comment>
<comment type="cofactor">
    <cofactor evidence="1">
        <name>Mg(2+)</name>
        <dbReference type="ChEBI" id="CHEBI:18420"/>
    </cofactor>
</comment>
<comment type="similarity">
    <text evidence="1">Belongs to the GlnE family.</text>
</comment>
<gene>
    <name evidence="1" type="primary">glnE</name>
    <name type="ordered locus">BB3233</name>
</gene>
<keyword id="KW-0067">ATP-binding</keyword>
<keyword id="KW-0460">Magnesium</keyword>
<keyword id="KW-0511">Multifunctional enzyme</keyword>
<keyword id="KW-0547">Nucleotide-binding</keyword>
<keyword id="KW-0548">Nucleotidyltransferase</keyword>
<keyword id="KW-0808">Transferase</keyword>